<dbReference type="EMBL" id="U26440">
    <property type="protein sequence ID" value="AAA67790.1"/>
    <property type="status" value="ALT_INIT"/>
    <property type="molecule type" value="Genomic_DNA"/>
</dbReference>
<dbReference type="EMBL" id="AE008917">
    <property type="protein sequence ID" value="AAL52486.1"/>
    <property type="status" value="ALT_INIT"/>
    <property type="molecule type" value="Genomic_DNA"/>
</dbReference>
<dbReference type="PIR" id="AC3415">
    <property type="entry name" value="AC3415"/>
</dbReference>
<dbReference type="RefSeq" id="WP_006256196.1">
    <property type="nucleotide sequence ID" value="NZ_GG703778.1"/>
</dbReference>
<dbReference type="SMR" id="Q8YG56"/>
<dbReference type="GeneID" id="29594147"/>
<dbReference type="KEGG" id="bme:BMEI1305"/>
<dbReference type="KEGG" id="bmel:DK63_100"/>
<dbReference type="PATRIC" id="fig|224914.52.peg.103"/>
<dbReference type="eggNOG" id="COG3203">
    <property type="taxonomic scope" value="Bacteria"/>
</dbReference>
<dbReference type="PhylomeDB" id="Q8YG56"/>
<dbReference type="Proteomes" id="UP000000419">
    <property type="component" value="Chromosome I"/>
</dbReference>
<dbReference type="GO" id="GO:0009279">
    <property type="term" value="C:cell outer membrane"/>
    <property type="evidence" value="ECO:0007669"/>
    <property type="project" value="UniProtKB-SubCell"/>
</dbReference>
<dbReference type="GO" id="GO:0046930">
    <property type="term" value="C:pore complex"/>
    <property type="evidence" value="ECO:0007669"/>
    <property type="project" value="UniProtKB-KW"/>
</dbReference>
<dbReference type="GO" id="GO:0015288">
    <property type="term" value="F:porin activity"/>
    <property type="evidence" value="ECO:0007669"/>
    <property type="project" value="UniProtKB-KW"/>
</dbReference>
<dbReference type="GO" id="GO:0006811">
    <property type="term" value="P:monoatomic ion transport"/>
    <property type="evidence" value="ECO:0007669"/>
    <property type="project" value="UniProtKB-KW"/>
</dbReference>
<dbReference type="InterPro" id="IPR003684">
    <property type="entry name" value="Porin_alphabac"/>
</dbReference>
<dbReference type="Pfam" id="PF02530">
    <property type="entry name" value="Porin_2"/>
    <property type="match status" value="1"/>
</dbReference>
<dbReference type="SUPFAM" id="SSF56935">
    <property type="entry name" value="Porins"/>
    <property type="match status" value="1"/>
</dbReference>
<gene>
    <name type="primary">omp2b</name>
    <name type="ordered locus">BMEI1305</name>
</gene>
<keyword id="KW-0998">Cell outer membrane</keyword>
<keyword id="KW-0406">Ion transport</keyword>
<keyword id="KW-0472">Membrane</keyword>
<keyword id="KW-0626">Porin</keyword>
<keyword id="KW-0732">Signal</keyword>
<keyword id="KW-0812">Transmembrane</keyword>
<keyword id="KW-1134">Transmembrane beta strand</keyword>
<keyword id="KW-0813">Transport</keyword>
<name>OMP2B_BRUME</name>
<sequence>MNIKSLLLGSAAALVAASGAQAADAIVAPEPEAVEYVRVCDAYGAGYFYIPGTEICLRVHGYVRYDVKGGDDVYSGTDRNGWDKGARFALRVSTGSETELGTLKTFTELRFNYAANNSGVDGKYGNETSSGTVMEFAYIQLGGLRVGIDESEFHTFTGYLGDVINDDVISAGSYRTGKISYTFTGGNGFSAVIALEQGGDNDGGYTGTTNYHIDGYMPDVVGGLKYAGGWGSIAGVVAYDSVIEEWAAKVRGDVNITDQFSVWLQGAYSSAATPDQNYGQWGGDWAVWGGLKYQATQKAAFNLQAAHDDWGKTAVTANVAYELVPGFTVTPEVSYTKFGGEWKNTVAEDNAWGGIVRFQRSF</sequence>
<feature type="signal peptide" evidence="3">
    <location>
        <begin position="1"/>
        <end position="22"/>
    </location>
</feature>
<feature type="chain" id="PRO_0000354014" description="Porin Omp2b">
    <location>
        <begin position="23"/>
        <end position="362"/>
    </location>
</feature>
<feature type="sequence variant" description="In strain: biovar 1.">
    <original>I</original>
    <variation>T</variation>
    <location>
        <position position="55"/>
    </location>
</feature>
<reference key="1">
    <citation type="journal article" date="1996" name="Int. J. Syst. Bacteriol.">
        <title>Species-specific sequences at the omp2 locus of Brucella type strains.</title>
        <authorList>
            <person name="Ficht T.A."/>
            <person name="Husseinen H.S."/>
            <person name="Derr J."/>
            <person name="Bearden S.W."/>
        </authorList>
    </citation>
    <scope>NUCLEOTIDE SEQUENCE [GENOMIC DNA]</scope>
    <source>
        <strain>biovar 1</strain>
    </source>
</reference>
<reference key="2">
    <citation type="journal article" date="2002" name="Proc. Natl. Acad. Sci. U.S.A.">
        <title>The genome sequence of the facultative intracellular pathogen Brucella melitensis.</title>
        <authorList>
            <person name="DelVecchio V.G."/>
            <person name="Kapatral V."/>
            <person name="Redkar R.J."/>
            <person name="Patra G."/>
            <person name="Mujer C."/>
            <person name="Los T."/>
            <person name="Ivanova N."/>
            <person name="Anderson I."/>
            <person name="Bhattacharyya A."/>
            <person name="Lykidis A."/>
            <person name="Reznik G."/>
            <person name="Jablonski L."/>
            <person name="Larsen N."/>
            <person name="D'Souza M."/>
            <person name="Bernal A."/>
            <person name="Mazur M."/>
            <person name="Goltsman E."/>
            <person name="Selkov E."/>
            <person name="Elzer P.H."/>
            <person name="Hagius S."/>
            <person name="O'Callaghan D."/>
            <person name="Letesson J.-J."/>
            <person name="Haselkorn R."/>
            <person name="Kyrpides N.C."/>
            <person name="Overbeek R."/>
        </authorList>
    </citation>
    <scope>NUCLEOTIDE SEQUENCE [LARGE SCALE GENOMIC DNA]</scope>
    <source>
        <strain>ATCC 23456 / CCUG 17765 / NCTC 10094 / 16M</strain>
    </source>
</reference>
<reference key="3">
    <citation type="journal article" date="2001" name="J. Bacteriol.">
        <title>Molecular, antigenic, and functional analyses of Omp2b porin size variants of Brucella spp.</title>
        <authorList>
            <person name="Paquet J.-Y."/>
            <person name="Diaz M.A."/>
            <person name="Genevrois S."/>
            <person name="Grayon M."/>
            <person name="Verger J.-M."/>
            <person name="de Bolle X."/>
            <person name="Lakey J.H."/>
            <person name="Letesson J.-J."/>
            <person name="Cloeckaert A."/>
        </authorList>
    </citation>
    <scope>FUNCTION IN PERMEABILITY TO SUGAR</scope>
    <source>
        <strain>ATCC 23456 / CCUG 17765 / NCTC 10094 / 16M</strain>
    </source>
</reference>
<organism>
    <name type="scientific">Brucella melitensis biotype 1 (strain ATCC 23456 / CCUG 17765 / NCTC 10094 / 16M)</name>
    <dbReference type="NCBI Taxonomy" id="224914"/>
    <lineage>
        <taxon>Bacteria</taxon>
        <taxon>Pseudomonadati</taxon>
        <taxon>Pseudomonadota</taxon>
        <taxon>Alphaproteobacteria</taxon>
        <taxon>Hyphomicrobiales</taxon>
        <taxon>Brucellaceae</taxon>
        <taxon>Brucella/Ochrobactrum group</taxon>
        <taxon>Brucella</taxon>
    </lineage>
</organism>
<evidence type="ECO:0000250" key="1"/>
<evidence type="ECO:0000250" key="2">
    <source>
        <dbReference type="UniProtKB" id="Q44665"/>
    </source>
</evidence>
<evidence type="ECO:0000255" key="3"/>
<evidence type="ECO:0000269" key="4">
    <source>
    </source>
</evidence>
<evidence type="ECO:0000305" key="5"/>
<accession>Q8YG56</accession>
<accession>Q45311</accession>
<comment type="function">
    <text evidence="4">Forms passive diffusion pores that allow small molecular weight hydrophilic materials across the outer membrane.</text>
</comment>
<comment type="subunit">
    <text evidence="2">Homotrimer.</text>
</comment>
<comment type="subcellular location">
    <subcellularLocation>
        <location evidence="1">Cell outer membrane</location>
        <topology evidence="1">Multi-pass membrane protein</topology>
    </subcellularLocation>
</comment>
<comment type="domain">
    <text evidence="2">Consists of 16-stranded beta-barrel sheets, with large surface-exposed loops, that form a transmembrane pore at the center of each barrel. The pore is partially ocluded by a peptide loop that folds into the pore lumen.</text>
</comment>
<comment type="miscellaneous">
    <text evidence="2">The pore formed by Omp2a is larger than the one formed by Omp2b. Omp2b pores have optimal permeability to allow growth and protection against harmful compounds. The larger pore formed by Omp2a may be advantageous for intracellular growth, when the bacterium is competing with the host cell for nutrients whose concentration is particularly low within the phagosome.</text>
</comment>
<comment type="similarity">
    <text evidence="5">Belongs to the alphaproteobacteria porin family.</text>
</comment>
<comment type="sequence caution" evidence="5">
    <conflict type="erroneous initiation">
        <sequence resource="EMBL-CDS" id="AAA67790"/>
    </conflict>
</comment>
<comment type="sequence caution" evidence="5">
    <conflict type="erroneous initiation">
        <sequence resource="EMBL-CDS" id="AAL52486"/>
    </conflict>
</comment>
<proteinExistence type="evidence at protein level"/>
<protein>
    <recommendedName>
        <fullName>Porin Omp2b</fullName>
    </recommendedName>
</protein>